<gene>
    <name evidence="1" type="primary">rpmJ</name>
    <name type="ordered locus">Xaut_2062</name>
</gene>
<name>RL36_XANP2</name>
<feature type="chain" id="PRO_1000101085" description="Large ribosomal subunit protein bL36">
    <location>
        <begin position="1"/>
        <end position="41"/>
    </location>
</feature>
<reference key="1">
    <citation type="submission" date="2007-07" db="EMBL/GenBank/DDBJ databases">
        <title>Complete sequence of chromosome of Xanthobacter autotrophicus Py2.</title>
        <authorList>
            <consortium name="US DOE Joint Genome Institute"/>
            <person name="Copeland A."/>
            <person name="Lucas S."/>
            <person name="Lapidus A."/>
            <person name="Barry K."/>
            <person name="Glavina del Rio T."/>
            <person name="Hammon N."/>
            <person name="Israni S."/>
            <person name="Dalin E."/>
            <person name="Tice H."/>
            <person name="Pitluck S."/>
            <person name="Sims D."/>
            <person name="Brettin T."/>
            <person name="Bruce D."/>
            <person name="Detter J.C."/>
            <person name="Han C."/>
            <person name="Tapia R."/>
            <person name="Brainard J."/>
            <person name="Schmutz J."/>
            <person name="Larimer F."/>
            <person name="Land M."/>
            <person name="Hauser L."/>
            <person name="Kyrpides N."/>
            <person name="Kim E."/>
            <person name="Ensigns S.A."/>
            <person name="Richardson P."/>
        </authorList>
    </citation>
    <scope>NUCLEOTIDE SEQUENCE [LARGE SCALE GENOMIC DNA]</scope>
    <source>
        <strain>ATCC BAA-1158 / Py2</strain>
    </source>
</reference>
<comment type="similarity">
    <text evidence="1">Belongs to the bacterial ribosomal protein bL36 family.</text>
</comment>
<sequence length="41" mass="5009">MKIRNSLKSLLGRHRDNRLVRRKGRVYIINKTQKRYKARQG</sequence>
<accession>A7IH13</accession>
<keyword id="KW-1185">Reference proteome</keyword>
<keyword id="KW-0687">Ribonucleoprotein</keyword>
<keyword id="KW-0689">Ribosomal protein</keyword>
<organism>
    <name type="scientific">Xanthobacter autotrophicus (strain ATCC BAA-1158 / Py2)</name>
    <dbReference type="NCBI Taxonomy" id="78245"/>
    <lineage>
        <taxon>Bacteria</taxon>
        <taxon>Pseudomonadati</taxon>
        <taxon>Pseudomonadota</taxon>
        <taxon>Alphaproteobacteria</taxon>
        <taxon>Hyphomicrobiales</taxon>
        <taxon>Xanthobacteraceae</taxon>
        <taxon>Xanthobacter</taxon>
    </lineage>
</organism>
<evidence type="ECO:0000255" key="1">
    <source>
        <dbReference type="HAMAP-Rule" id="MF_00251"/>
    </source>
</evidence>
<evidence type="ECO:0000305" key="2"/>
<dbReference type="EMBL" id="CP000781">
    <property type="protein sequence ID" value="ABS67306.1"/>
    <property type="molecule type" value="Genomic_DNA"/>
</dbReference>
<dbReference type="SMR" id="A7IH13"/>
<dbReference type="STRING" id="78245.Xaut_2062"/>
<dbReference type="KEGG" id="xau:Xaut_2062"/>
<dbReference type="eggNOG" id="COG0257">
    <property type="taxonomic scope" value="Bacteria"/>
</dbReference>
<dbReference type="HOGENOM" id="CLU_135723_3_0_5"/>
<dbReference type="OrthoDB" id="9801558at2"/>
<dbReference type="PhylomeDB" id="A7IH13"/>
<dbReference type="Proteomes" id="UP000002417">
    <property type="component" value="Chromosome"/>
</dbReference>
<dbReference type="GO" id="GO:1990904">
    <property type="term" value="C:ribonucleoprotein complex"/>
    <property type="evidence" value="ECO:0007669"/>
    <property type="project" value="UniProtKB-KW"/>
</dbReference>
<dbReference type="GO" id="GO:0005840">
    <property type="term" value="C:ribosome"/>
    <property type="evidence" value="ECO:0007669"/>
    <property type="project" value="UniProtKB-KW"/>
</dbReference>
<dbReference type="GO" id="GO:0003735">
    <property type="term" value="F:structural constituent of ribosome"/>
    <property type="evidence" value="ECO:0007669"/>
    <property type="project" value="InterPro"/>
</dbReference>
<dbReference type="GO" id="GO:0006412">
    <property type="term" value="P:translation"/>
    <property type="evidence" value="ECO:0007669"/>
    <property type="project" value="UniProtKB-UniRule"/>
</dbReference>
<dbReference type="HAMAP" id="MF_00251">
    <property type="entry name" value="Ribosomal_bL36"/>
    <property type="match status" value="1"/>
</dbReference>
<dbReference type="InterPro" id="IPR000473">
    <property type="entry name" value="Ribosomal_bL36"/>
</dbReference>
<dbReference type="InterPro" id="IPR035977">
    <property type="entry name" value="Ribosomal_bL36_sp"/>
</dbReference>
<dbReference type="InterPro" id="IPR047621">
    <property type="entry name" value="Ribosomal_L36_bact"/>
</dbReference>
<dbReference type="NCBIfam" id="NF002021">
    <property type="entry name" value="PRK00831.1"/>
    <property type="match status" value="1"/>
</dbReference>
<dbReference type="NCBIfam" id="TIGR01022">
    <property type="entry name" value="rpmJ_bact"/>
    <property type="match status" value="1"/>
</dbReference>
<dbReference type="PANTHER" id="PTHR47781">
    <property type="entry name" value="50S RIBOSOMAL PROTEIN L36 2"/>
    <property type="match status" value="1"/>
</dbReference>
<dbReference type="PANTHER" id="PTHR47781:SF1">
    <property type="entry name" value="LARGE RIBOSOMAL SUBUNIT PROTEIN BL36B"/>
    <property type="match status" value="1"/>
</dbReference>
<dbReference type="Pfam" id="PF00444">
    <property type="entry name" value="Ribosomal_L36"/>
    <property type="match status" value="1"/>
</dbReference>
<dbReference type="SUPFAM" id="SSF57840">
    <property type="entry name" value="Ribosomal protein L36"/>
    <property type="match status" value="1"/>
</dbReference>
<protein>
    <recommendedName>
        <fullName evidence="1">Large ribosomal subunit protein bL36</fullName>
    </recommendedName>
    <alternativeName>
        <fullName evidence="2">50S ribosomal protein L36</fullName>
    </alternativeName>
</protein>
<proteinExistence type="inferred from homology"/>